<organism>
    <name type="scientific">Prochlorococcus marinus (strain MIT 9312)</name>
    <dbReference type="NCBI Taxonomy" id="74546"/>
    <lineage>
        <taxon>Bacteria</taxon>
        <taxon>Bacillati</taxon>
        <taxon>Cyanobacteriota</taxon>
        <taxon>Cyanophyceae</taxon>
        <taxon>Synechococcales</taxon>
        <taxon>Prochlorococcaceae</taxon>
        <taxon>Prochlorococcus</taxon>
    </lineage>
</organism>
<comment type="function">
    <text evidence="1">This protein binds to the 23S rRNA, and is important in its secondary structure. It is located near the subunit interface in the base of the L7/L12 stalk, and near the tRNA binding site of the peptidyltransferase center.</text>
</comment>
<comment type="subunit">
    <text evidence="1">Part of the 50S ribosomal subunit.</text>
</comment>
<comment type="similarity">
    <text evidence="1">Belongs to the universal ribosomal protein uL6 family.</text>
</comment>
<keyword id="KW-0687">Ribonucleoprotein</keyword>
<keyword id="KW-0689">Ribosomal protein</keyword>
<keyword id="KW-0694">RNA-binding</keyword>
<keyword id="KW-0699">rRNA-binding</keyword>
<feature type="chain" id="PRO_0000260912" description="Large ribosomal subunit protein uL6">
    <location>
        <begin position="1"/>
        <end position="179"/>
    </location>
</feature>
<gene>
    <name evidence="1" type="primary">rplF</name>
    <name evidence="1" type="synonym">rpl6</name>
    <name type="ordered locus">PMT9312_1636</name>
</gene>
<accession>Q318J8</accession>
<sequence>MSRIGKTPVLIPEKVTVDLDGLIVTVKGPKGELKRLMPEGVSFDKKDNTVVVSPTTNKIHSRQRHGLCRALIANMVEGVTQGFSKKLEIVGVGSRAQVKGKNLVVSAGYSHPVEMIPPDGITYKVESNTNVTVSGIDKEIVGNEAAKIRSIRPPEPYKGKGIKYHDERILRKAGKSGKK</sequence>
<protein>
    <recommendedName>
        <fullName evidence="1">Large ribosomal subunit protein uL6</fullName>
    </recommendedName>
    <alternativeName>
        <fullName evidence="2">50S ribosomal protein L6</fullName>
    </alternativeName>
</protein>
<reference key="1">
    <citation type="journal article" date="2006" name="Science">
        <title>Genomic islands and the ecology and evolution of Prochlorococcus.</title>
        <authorList>
            <person name="Coleman M.L."/>
            <person name="Sullivan M.B."/>
            <person name="Martiny A.C."/>
            <person name="Steglich C."/>
            <person name="Barry K."/>
            <person name="Delong E.F."/>
            <person name="Chisholm S.W."/>
        </authorList>
    </citation>
    <scope>NUCLEOTIDE SEQUENCE [LARGE SCALE GENOMIC DNA]</scope>
    <source>
        <strain>MIT 9312</strain>
    </source>
</reference>
<dbReference type="EMBL" id="CP000111">
    <property type="protein sequence ID" value="ABB50697.1"/>
    <property type="molecule type" value="Genomic_DNA"/>
</dbReference>
<dbReference type="RefSeq" id="WP_011377179.1">
    <property type="nucleotide sequence ID" value="NC_007577.1"/>
</dbReference>
<dbReference type="SMR" id="Q318J8"/>
<dbReference type="STRING" id="74546.PMT9312_1636"/>
<dbReference type="KEGG" id="pmi:PMT9312_1636"/>
<dbReference type="eggNOG" id="COG0097">
    <property type="taxonomic scope" value="Bacteria"/>
</dbReference>
<dbReference type="HOGENOM" id="CLU_065464_1_2_3"/>
<dbReference type="OrthoDB" id="9805007at2"/>
<dbReference type="Proteomes" id="UP000002715">
    <property type="component" value="Chromosome"/>
</dbReference>
<dbReference type="GO" id="GO:0022625">
    <property type="term" value="C:cytosolic large ribosomal subunit"/>
    <property type="evidence" value="ECO:0007669"/>
    <property type="project" value="TreeGrafter"/>
</dbReference>
<dbReference type="GO" id="GO:0019843">
    <property type="term" value="F:rRNA binding"/>
    <property type="evidence" value="ECO:0007669"/>
    <property type="project" value="UniProtKB-UniRule"/>
</dbReference>
<dbReference type="GO" id="GO:0003735">
    <property type="term" value="F:structural constituent of ribosome"/>
    <property type="evidence" value="ECO:0007669"/>
    <property type="project" value="InterPro"/>
</dbReference>
<dbReference type="GO" id="GO:0002181">
    <property type="term" value="P:cytoplasmic translation"/>
    <property type="evidence" value="ECO:0007669"/>
    <property type="project" value="TreeGrafter"/>
</dbReference>
<dbReference type="FunFam" id="3.90.930.12:FF:000001">
    <property type="entry name" value="50S ribosomal protein L6"/>
    <property type="match status" value="1"/>
</dbReference>
<dbReference type="FunFam" id="3.90.930.12:FF:000002">
    <property type="entry name" value="50S ribosomal protein L6"/>
    <property type="match status" value="1"/>
</dbReference>
<dbReference type="Gene3D" id="3.90.930.12">
    <property type="entry name" value="Ribosomal protein L6, alpha-beta domain"/>
    <property type="match status" value="2"/>
</dbReference>
<dbReference type="HAMAP" id="MF_01365_B">
    <property type="entry name" value="Ribosomal_uL6_B"/>
    <property type="match status" value="1"/>
</dbReference>
<dbReference type="InterPro" id="IPR000702">
    <property type="entry name" value="Ribosomal_uL6-like"/>
</dbReference>
<dbReference type="InterPro" id="IPR036789">
    <property type="entry name" value="Ribosomal_uL6-like_a/b-dom_sf"/>
</dbReference>
<dbReference type="InterPro" id="IPR020040">
    <property type="entry name" value="Ribosomal_uL6_a/b-dom"/>
</dbReference>
<dbReference type="InterPro" id="IPR019906">
    <property type="entry name" value="Ribosomal_uL6_bac-type"/>
</dbReference>
<dbReference type="InterPro" id="IPR002358">
    <property type="entry name" value="Ribosomal_uL6_CS"/>
</dbReference>
<dbReference type="NCBIfam" id="TIGR03654">
    <property type="entry name" value="L6_bact"/>
    <property type="match status" value="1"/>
</dbReference>
<dbReference type="PANTHER" id="PTHR11655">
    <property type="entry name" value="60S/50S RIBOSOMAL PROTEIN L6/L9"/>
    <property type="match status" value="1"/>
</dbReference>
<dbReference type="PANTHER" id="PTHR11655:SF14">
    <property type="entry name" value="LARGE RIBOSOMAL SUBUNIT PROTEIN UL6M"/>
    <property type="match status" value="1"/>
</dbReference>
<dbReference type="Pfam" id="PF00347">
    <property type="entry name" value="Ribosomal_L6"/>
    <property type="match status" value="2"/>
</dbReference>
<dbReference type="PIRSF" id="PIRSF002162">
    <property type="entry name" value="Ribosomal_L6"/>
    <property type="match status" value="1"/>
</dbReference>
<dbReference type="PRINTS" id="PR00059">
    <property type="entry name" value="RIBOSOMALL6"/>
</dbReference>
<dbReference type="SUPFAM" id="SSF56053">
    <property type="entry name" value="Ribosomal protein L6"/>
    <property type="match status" value="2"/>
</dbReference>
<dbReference type="PROSITE" id="PS00525">
    <property type="entry name" value="RIBOSOMAL_L6_1"/>
    <property type="match status" value="1"/>
</dbReference>
<evidence type="ECO:0000255" key="1">
    <source>
        <dbReference type="HAMAP-Rule" id="MF_01365"/>
    </source>
</evidence>
<evidence type="ECO:0000305" key="2"/>
<name>RL6_PROM9</name>
<proteinExistence type="inferred from homology"/>